<keyword id="KW-0963">Cytoplasm</keyword>
<keyword id="KW-0396">Initiation factor</keyword>
<keyword id="KW-0648">Protein biosynthesis</keyword>
<keyword id="KW-0694">RNA-binding</keyword>
<keyword id="KW-0699">rRNA-binding</keyword>
<feature type="chain" id="PRO_0000338820" description="Translation initiation factor IF-1">
    <location>
        <begin position="1"/>
        <end position="72"/>
    </location>
</feature>
<feature type="domain" description="S1-like" evidence="1">
    <location>
        <begin position="1"/>
        <end position="72"/>
    </location>
</feature>
<name>IF1_ENT38</name>
<reference key="1">
    <citation type="journal article" date="2010" name="PLoS Genet.">
        <title>Genome sequence of the plant growth promoting endophytic bacterium Enterobacter sp. 638.</title>
        <authorList>
            <person name="Taghavi S."/>
            <person name="van der Lelie D."/>
            <person name="Hoffman A."/>
            <person name="Zhang Y.B."/>
            <person name="Walla M.D."/>
            <person name="Vangronsveld J."/>
            <person name="Newman L."/>
            <person name="Monchy S."/>
        </authorList>
    </citation>
    <scope>NUCLEOTIDE SEQUENCE [LARGE SCALE GENOMIC DNA]</scope>
    <source>
        <strain>638</strain>
    </source>
</reference>
<proteinExistence type="inferred from homology"/>
<evidence type="ECO:0000255" key="1">
    <source>
        <dbReference type="HAMAP-Rule" id="MF_00075"/>
    </source>
</evidence>
<dbReference type="EMBL" id="CP000653">
    <property type="protein sequence ID" value="ABP60088.1"/>
    <property type="molecule type" value="Genomic_DNA"/>
</dbReference>
<dbReference type="RefSeq" id="WP_002211347.1">
    <property type="nucleotide sequence ID" value="NC_009436.1"/>
</dbReference>
<dbReference type="SMR" id="A4W8Q8"/>
<dbReference type="STRING" id="399742.Ent638_1407"/>
<dbReference type="GeneID" id="98387575"/>
<dbReference type="KEGG" id="ent:Ent638_1407"/>
<dbReference type="eggNOG" id="COG0361">
    <property type="taxonomic scope" value="Bacteria"/>
</dbReference>
<dbReference type="HOGENOM" id="CLU_151267_1_0_6"/>
<dbReference type="OrthoDB" id="9803250at2"/>
<dbReference type="Proteomes" id="UP000000230">
    <property type="component" value="Chromosome"/>
</dbReference>
<dbReference type="GO" id="GO:0005829">
    <property type="term" value="C:cytosol"/>
    <property type="evidence" value="ECO:0007669"/>
    <property type="project" value="TreeGrafter"/>
</dbReference>
<dbReference type="GO" id="GO:0043022">
    <property type="term" value="F:ribosome binding"/>
    <property type="evidence" value="ECO:0007669"/>
    <property type="project" value="UniProtKB-UniRule"/>
</dbReference>
<dbReference type="GO" id="GO:0019843">
    <property type="term" value="F:rRNA binding"/>
    <property type="evidence" value="ECO:0007669"/>
    <property type="project" value="UniProtKB-UniRule"/>
</dbReference>
<dbReference type="GO" id="GO:0003743">
    <property type="term" value="F:translation initiation factor activity"/>
    <property type="evidence" value="ECO:0007669"/>
    <property type="project" value="UniProtKB-UniRule"/>
</dbReference>
<dbReference type="CDD" id="cd04451">
    <property type="entry name" value="S1_IF1"/>
    <property type="match status" value="1"/>
</dbReference>
<dbReference type="FunFam" id="2.40.50.140:FF:000002">
    <property type="entry name" value="Translation initiation factor IF-1"/>
    <property type="match status" value="1"/>
</dbReference>
<dbReference type="Gene3D" id="2.40.50.140">
    <property type="entry name" value="Nucleic acid-binding proteins"/>
    <property type="match status" value="1"/>
</dbReference>
<dbReference type="HAMAP" id="MF_00075">
    <property type="entry name" value="IF_1"/>
    <property type="match status" value="1"/>
</dbReference>
<dbReference type="InterPro" id="IPR012340">
    <property type="entry name" value="NA-bd_OB-fold"/>
</dbReference>
<dbReference type="InterPro" id="IPR006196">
    <property type="entry name" value="RNA-binding_domain_S1_IF1"/>
</dbReference>
<dbReference type="InterPro" id="IPR003029">
    <property type="entry name" value="S1_domain"/>
</dbReference>
<dbReference type="InterPro" id="IPR004368">
    <property type="entry name" value="TIF_IF1"/>
</dbReference>
<dbReference type="NCBIfam" id="TIGR00008">
    <property type="entry name" value="infA"/>
    <property type="match status" value="1"/>
</dbReference>
<dbReference type="PANTHER" id="PTHR33370">
    <property type="entry name" value="TRANSLATION INITIATION FACTOR IF-1, CHLOROPLASTIC"/>
    <property type="match status" value="1"/>
</dbReference>
<dbReference type="PANTHER" id="PTHR33370:SF1">
    <property type="entry name" value="TRANSLATION INITIATION FACTOR IF-1, CHLOROPLASTIC"/>
    <property type="match status" value="1"/>
</dbReference>
<dbReference type="Pfam" id="PF01176">
    <property type="entry name" value="eIF-1a"/>
    <property type="match status" value="1"/>
</dbReference>
<dbReference type="SMART" id="SM00316">
    <property type="entry name" value="S1"/>
    <property type="match status" value="1"/>
</dbReference>
<dbReference type="SUPFAM" id="SSF50249">
    <property type="entry name" value="Nucleic acid-binding proteins"/>
    <property type="match status" value="1"/>
</dbReference>
<dbReference type="PROSITE" id="PS50832">
    <property type="entry name" value="S1_IF1_TYPE"/>
    <property type="match status" value="1"/>
</dbReference>
<gene>
    <name evidence="1" type="primary">infA</name>
    <name type="ordered locus">Ent638_1407</name>
</gene>
<comment type="function">
    <text evidence="1">One of the essential components for the initiation of protein synthesis. Stabilizes the binding of IF-2 and IF-3 on the 30S subunit to which N-formylmethionyl-tRNA(fMet) subsequently binds. Helps modulate mRNA selection, yielding the 30S pre-initiation complex (PIC). Upon addition of the 50S ribosomal subunit IF-1, IF-2 and IF-3 are released leaving the mature 70S translation initiation complex.</text>
</comment>
<comment type="subunit">
    <text evidence="1">Component of the 30S ribosomal translation pre-initiation complex which assembles on the 30S ribosome in the order IF-2 and IF-3, IF-1 and N-formylmethionyl-tRNA(fMet); mRNA recruitment can occur at any time during PIC assembly.</text>
</comment>
<comment type="subcellular location">
    <subcellularLocation>
        <location evidence="1">Cytoplasm</location>
    </subcellularLocation>
</comment>
<comment type="similarity">
    <text evidence="1">Belongs to the IF-1 family.</text>
</comment>
<accession>A4W8Q8</accession>
<sequence length="72" mass="8236">MAKEDNIEMQGTVLDTLPNTMFRVELENGHVVTAHISGKMRKNYIRILTGDKVTVELTPYDLSKGRIVFRSR</sequence>
<protein>
    <recommendedName>
        <fullName evidence="1">Translation initiation factor IF-1</fullName>
    </recommendedName>
</protein>
<organism>
    <name type="scientific">Enterobacter sp. (strain 638)</name>
    <dbReference type="NCBI Taxonomy" id="399742"/>
    <lineage>
        <taxon>Bacteria</taxon>
        <taxon>Pseudomonadati</taxon>
        <taxon>Pseudomonadota</taxon>
        <taxon>Gammaproteobacteria</taxon>
        <taxon>Enterobacterales</taxon>
        <taxon>Enterobacteriaceae</taxon>
        <taxon>Enterobacter</taxon>
    </lineage>
</organism>